<name>TM214_HUMAN</name>
<comment type="function">
    <text evidence="3">Critical mediator, in cooperation with CASP4, of endoplasmic reticulum-stress induced apoptosis. Required or the activation of CASP4 following endoplasmic reticulum stress.</text>
</comment>
<comment type="subunit">
    <text>Constitutively interacts with CASP4; required for the localization of procaspase 4 to the ER.</text>
</comment>
<comment type="subcellular location">
    <subcellularLocation>
        <location evidence="3">Endoplasmic reticulum membrane</location>
        <topology evidence="3">Multi-pass membrane protein</topology>
    </subcellularLocation>
</comment>
<comment type="alternative products">
    <event type="alternative splicing"/>
    <isoform>
        <id>Q6NUQ4-1</id>
        <name>1</name>
        <sequence type="displayed"/>
    </isoform>
    <isoform>
        <id>Q6NUQ4-2</id>
        <name>2</name>
        <sequence type="described" ref="VSP_041155"/>
    </isoform>
</comment>
<comment type="similarity">
    <text evidence="5">Belongs to the TMEM214 family.</text>
</comment>
<comment type="sequence caution" evidence="5">
    <conflict type="erroneous initiation">
        <sequence resource="EMBL-CDS" id="AAL55739"/>
    </conflict>
</comment>
<comment type="sequence caution" evidence="5">
    <conflict type="erroneous initiation">
        <sequence resource="EMBL-CDS" id="BAA91038"/>
    </conflict>
</comment>
<comment type="sequence caution" evidence="5">
    <conflict type="frameshift">
        <sequence resource="EMBL-CDS" id="BAC11331"/>
    </conflict>
</comment>
<comment type="sequence caution" evidence="5">
    <conflict type="erroneous initiation">
        <sequence resource="EMBL-CDS" id="CAH10591"/>
    </conflict>
</comment>
<dbReference type="EMBL" id="AK000261">
    <property type="protein sequence ID" value="BAA91038.1"/>
    <property type="status" value="ALT_INIT"/>
    <property type="molecule type" value="mRNA"/>
</dbReference>
<dbReference type="EMBL" id="AK074981">
    <property type="protein sequence ID" value="BAC11331.1"/>
    <property type="status" value="ALT_FRAME"/>
    <property type="molecule type" value="mRNA"/>
</dbReference>
<dbReference type="EMBL" id="AK097308">
    <property type="protein sequence ID" value="BAG53451.1"/>
    <property type="molecule type" value="mRNA"/>
</dbReference>
<dbReference type="EMBL" id="AC013472">
    <property type="protein sequence ID" value="AAY14654.1"/>
    <property type="molecule type" value="Genomic_DNA"/>
</dbReference>
<dbReference type="EMBL" id="CH471053">
    <property type="protein sequence ID" value="EAX00655.1"/>
    <property type="molecule type" value="Genomic_DNA"/>
</dbReference>
<dbReference type="EMBL" id="CH471053">
    <property type="protein sequence ID" value="EAX00657.1"/>
    <property type="molecule type" value="Genomic_DNA"/>
</dbReference>
<dbReference type="EMBL" id="CH471053">
    <property type="protein sequence ID" value="EAX00659.1"/>
    <property type="molecule type" value="Genomic_DNA"/>
</dbReference>
<dbReference type="EMBL" id="AL833725">
    <property type="protein sequence ID" value="CAH10591.1"/>
    <property type="status" value="ALT_INIT"/>
    <property type="molecule type" value="mRNA"/>
</dbReference>
<dbReference type="EMBL" id="BC068479">
    <property type="protein sequence ID" value="AAH68479.1"/>
    <property type="molecule type" value="mRNA"/>
</dbReference>
<dbReference type="EMBL" id="AF289555">
    <property type="protein sequence ID" value="AAL55739.1"/>
    <property type="status" value="ALT_INIT"/>
    <property type="molecule type" value="mRNA"/>
</dbReference>
<dbReference type="CCDS" id="CCDS42664.1">
    <molecule id="Q6NUQ4-1"/>
</dbReference>
<dbReference type="CCDS" id="CCDS46242.1">
    <molecule id="Q6NUQ4-2"/>
</dbReference>
<dbReference type="RefSeq" id="NP_001077059.1">
    <molecule id="Q6NUQ4-2"/>
    <property type="nucleotide sequence ID" value="NM_001083590.2"/>
</dbReference>
<dbReference type="RefSeq" id="NP_060197.4">
    <molecule id="Q6NUQ4-1"/>
    <property type="nucleotide sequence ID" value="NM_017727.4"/>
</dbReference>
<dbReference type="BioGRID" id="120216">
    <property type="interactions" value="180"/>
</dbReference>
<dbReference type="FunCoup" id="Q6NUQ4">
    <property type="interactions" value="2676"/>
</dbReference>
<dbReference type="IntAct" id="Q6NUQ4">
    <property type="interactions" value="86"/>
</dbReference>
<dbReference type="MINT" id="Q6NUQ4"/>
<dbReference type="STRING" id="9606.ENSP00000238788"/>
<dbReference type="TCDB" id="8.A.209.1.1">
    <property type="family name" value="the tmem214 glucose transporter regulator (tmem214) family"/>
</dbReference>
<dbReference type="GlyCosmos" id="Q6NUQ4">
    <property type="glycosylation" value="2 sites, No reported glycans"/>
</dbReference>
<dbReference type="GlyGen" id="Q6NUQ4">
    <property type="glycosylation" value="4 sites, 1 N-linked glycan (1 site), 1 O-linked glycan (1 site)"/>
</dbReference>
<dbReference type="iPTMnet" id="Q6NUQ4"/>
<dbReference type="PhosphoSitePlus" id="Q6NUQ4"/>
<dbReference type="SwissPalm" id="Q6NUQ4"/>
<dbReference type="BioMuta" id="TMEM214"/>
<dbReference type="DMDM" id="189042272"/>
<dbReference type="jPOST" id="Q6NUQ4"/>
<dbReference type="MassIVE" id="Q6NUQ4"/>
<dbReference type="PaxDb" id="9606-ENSP00000238788"/>
<dbReference type="PeptideAtlas" id="Q6NUQ4"/>
<dbReference type="ProteomicsDB" id="66702">
    <molecule id="Q6NUQ4-1"/>
</dbReference>
<dbReference type="ProteomicsDB" id="66703">
    <molecule id="Q6NUQ4-2"/>
</dbReference>
<dbReference type="Pumba" id="Q6NUQ4"/>
<dbReference type="Antibodypedia" id="28071">
    <property type="antibodies" value="124 antibodies from 25 providers"/>
</dbReference>
<dbReference type="DNASU" id="54867"/>
<dbReference type="Ensembl" id="ENST00000238788.14">
    <molecule id="Q6NUQ4-1"/>
    <property type="protein sequence ID" value="ENSP00000238788.9"/>
    <property type="gene ID" value="ENSG00000119777.20"/>
</dbReference>
<dbReference type="Ensembl" id="ENST00000321326.11">
    <molecule id="Q6NUQ4-1"/>
    <property type="protein sequence ID" value="ENSP00000319469.7"/>
    <property type="gene ID" value="ENSG00000119777.20"/>
</dbReference>
<dbReference type="Ensembl" id="ENST00000404032.7">
    <molecule id="Q6NUQ4-2"/>
    <property type="protein sequence ID" value="ENSP00000384417.3"/>
    <property type="gene ID" value="ENSG00000119777.20"/>
</dbReference>
<dbReference type="GeneID" id="54867"/>
<dbReference type="KEGG" id="hsa:54867"/>
<dbReference type="MANE-Select" id="ENST00000238788.14">
    <property type="protein sequence ID" value="ENSP00000238788.9"/>
    <property type="RefSeq nucleotide sequence ID" value="NM_017727.5"/>
    <property type="RefSeq protein sequence ID" value="NP_060197.4"/>
</dbReference>
<dbReference type="UCSC" id="uc002ria.5">
    <molecule id="Q6NUQ4-1"/>
    <property type="organism name" value="human"/>
</dbReference>
<dbReference type="AGR" id="HGNC:25983"/>
<dbReference type="CTD" id="54867"/>
<dbReference type="DisGeNET" id="54867"/>
<dbReference type="GeneCards" id="TMEM214"/>
<dbReference type="HGNC" id="HGNC:25983">
    <property type="gene designation" value="TMEM214"/>
</dbReference>
<dbReference type="HPA" id="ENSG00000119777">
    <property type="expression patterns" value="Low tissue specificity"/>
</dbReference>
<dbReference type="MIM" id="615301">
    <property type="type" value="gene"/>
</dbReference>
<dbReference type="neXtProt" id="NX_Q6NUQ4"/>
<dbReference type="OpenTargets" id="ENSG00000119777"/>
<dbReference type="PharmGKB" id="PA162406505"/>
<dbReference type="VEuPathDB" id="HostDB:ENSG00000119777"/>
<dbReference type="eggNOG" id="KOG4467">
    <property type="taxonomic scope" value="Eukaryota"/>
</dbReference>
<dbReference type="GeneTree" id="ENSGT00390000002693"/>
<dbReference type="HOGENOM" id="CLU_025330_1_0_1"/>
<dbReference type="InParanoid" id="Q6NUQ4"/>
<dbReference type="OMA" id="NGSAGKW"/>
<dbReference type="OrthoDB" id="10022292at2759"/>
<dbReference type="PAN-GO" id="Q6NUQ4">
    <property type="GO annotations" value="2 GO annotations based on evolutionary models"/>
</dbReference>
<dbReference type="PhylomeDB" id="Q6NUQ4"/>
<dbReference type="TreeFam" id="TF329489"/>
<dbReference type="PathwayCommons" id="Q6NUQ4"/>
<dbReference type="SignaLink" id="Q6NUQ4"/>
<dbReference type="BioGRID-ORCS" id="54867">
    <property type="hits" value="12 hits in 1162 CRISPR screens"/>
</dbReference>
<dbReference type="ChiTaRS" id="TMEM214">
    <property type="organism name" value="human"/>
</dbReference>
<dbReference type="GenomeRNAi" id="54867"/>
<dbReference type="Pharos" id="Q6NUQ4">
    <property type="development level" value="Tdark"/>
</dbReference>
<dbReference type="PRO" id="PR:Q6NUQ4"/>
<dbReference type="Proteomes" id="UP000005640">
    <property type="component" value="Chromosome 2"/>
</dbReference>
<dbReference type="RNAct" id="Q6NUQ4">
    <property type="molecule type" value="protein"/>
</dbReference>
<dbReference type="Bgee" id="ENSG00000119777">
    <property type="expression patterns" value="Expressed in adenohypophysis and 206 other cell types or tissues"/>
</dbReference>
<dbReference type="ExpressionAtlas" id="Q6NUQ4">
    <property type="expression patterns" value="baseline and differential"/>
</dbReference>
<dbReference type="GO" id="GO:0005881">
    <property type="term" value="C:cytoplasmic microtubule"/>
    <property type="evidence" value="ECO:0000314"/>
    <property type="project" value="UniProtKB"/>
</dbReference>
<dbReference type="GO" id="GO:0005829">
    <property type="term" value="C:cytosol"/>
    <property type="evidence" value="ECO:0000314"/>
    <property type="project" value="HPA"/>
</dbReference>
<dbReference type="GO" id="GO:0005783">
    <property type="term" value="C:endoplasmic reticulum"/>
    <property type="evidence" value="ECO:0000314"/>
    <property type="project" value="HPA"/>
</dbReference>
<dbReference type="GO" id="GO:0005789">
    <property type="term" value="C:endoplasmic reticulum membrane"/>
    <property type="evidence" value="ECO:0007669"/>
    <property type="project" value="UniProtKB-SubCell"/>
</dbReference>
<dbReference type="GO" id="GO:0005794">
    <property type="term" value="C:Golgi apparatus"/>
    <property type="evidence" value="ECO:0000314"/>
    <property type="project" value="HPA"/>
</dbReference>
<dbReference type="GO" id="GO:0006915">
    <property type="term" value="P:apoptotic process"/>
    <property type="evidence" value="ECO:0007669"/>
    <property type="project" value="UniProtKB-KW"/>
</dbReference>
<dbReference type="InterPro" id="IPR019308">
    <property type="entry name" value="TMEM214"/>
</dbReference>
<dbReference type="PANTHER" id="PTHR13448">
    <property type="entry name" value="TRANSMEMBRANE PROTEIN 214"/>
    <property type="match status" value="1"/>
</dbReference>
<dbReference type="PANTHER" id="PTHR13448:SF0">
    <property type="entry name" value="TRANSMEMBRANE PROTEIN 214"/>
    <property type="match status" value="1"/>
</dbReference>
<dbReference type="Pfam" id="PF10151">
    <property type="entry name" value="TMEM214"/>
    <property type="match status" value="1"/>
</dbReference>
<reference key="1">
    <citation type="journal article" date="2004" name="Nat. Genet.">
        <title>Complete sequencing and characterization of 21,243 full-length human cDNAs.</title>
        <authorList>
            <person name="Ota T."/>
            <person name="Suzuki Y."/>
            <person name="Nishikawa T."/>
            <person name="Otsuki T."/>
            <person name="Sugiyama T."/>
            <person name="Irie R."/>
            <person name="Wakamatsu A."/>
            <person name="Hayashi K."/>
            <person name="Sato H."/>
            <person name="Nagai K."/>
            <person name="Kimura K."/>
            <person name="Makita H."/>
            <person name="Sekine M."/>
            <person name="Obayashi M."/>
            <person name="Nishi T."/>
            <person name="Shibahara T."/>
            <person name="Tanaka T."/>
            <person name="Ishii S."/>
            <person name="Yamamoto J."/>
            <person name="Saito K."/>
            <person name="Kawai Y."/>
            <person name="Isono Y."/>
            <person name="Nakamura Y."/>
            <person name="Nagahari K."/>
            <person name="Murakami K."/>
            <person name="Yasuda T."/>
            <person name="Iwayanagi T."/>
            <person name="Wagatsuma M."/>
            <person name="Shiratori A."/>
            <person name="Sudo H."/>
            <person name="Hosoiri T."/>
            <person name="Kaku Y."/>
            <person name="Kodaira H."/>
            <person name="Kondo H."/>
            <person name="Sugawara M."/>
            <person name="Takahashi M."/>
            <person name="Kanda K."/>
            <person name="Yokoi T."/>
            <person name="Furuya T."/>
            <person name="Kikkawa E."/>
            <person name="Omura Y."/>
            <person name="Abe K."/>
            <person name="Kamihara K."/>
            <person name="Katsuta N."/>
            <person name="Sato K."/>
            <person name="Tanikawa M."/>
            <person name="Yamazaki M."/>
            <person name="Ninomiya K."/>
            <person name="Ishibashi T."/>
            <person name="Yamashita H."/>
            <person name="Murakawa K."/>
            <person name="Fujimori K."/>
            <person name="Tanai H."/>
            <person name="Kimata M."/>
            <person name="Watanabe M."/>
            <person name="Hiraoka S."/>
            <person name="Chiba Y."/>
            <person name="Ishida S."/>
            <person name="Ono Y."/>
            <person name="Takiguchi S."/>
            <person name="Watanabe S."/>
            <person name="Yosida M."/>
            <person name="Hotuta T."/>
            <person name="Kusano J."/>
            <person name="Kanehori K."/>
            <person name="Takahashi-Fujii A."/>
            <person name="Hara H."/>
            <person name="Tanase T.-O."/>
            <person name="Nomura Y."/>
            <person name="Togiya S."/>
            <person name="Komai F."/>
            <person name="Hara R."/>
            <person name="Takeuchi K."/>
            <person name="Arita M."/>
            <person name="Imose N."/>
            <person name="Musashino K."/>
            <person name="Yuuki H."/>
            <person name="Oshima A."/>
            <person name="Sasaki N."/>
            <person name="Aotsuka S."/>
            <person name="Yoshikawa Y."/>
            <person name="Matsunawa H."/>
            <person name="Ichihara T."/>
            <person name="Shiohata N."/>
            <person name="Sano S."/>
            <person name="Moriya S."/>
            <person name="Momiyama H."/>
            <person name="Satoh N."/>
            <person name="Takami S."/>
            <person name="Terashima Y."/>
            <person name="Suzuki O."/>
            <person name="Nakagawa S."/>
            <person name="Senoh A."/>
            <person name="Mizoguchi H."/>
            <person name="Goto Y."/>
            <person name="Shimizu F."/>
            <person name="Wakebe H."/>
            <person name="Hishigaki H."/>
            <person name="Watanabe T."/>
            <person name="Sugiyama A."/>
            <person name="Takemoto M."/>
            <person name="Kawakami B."/>
            <person name="Yamazaki M."/>
            <person name="Watanabe K."/>
            <person name="Kumagai A."/>
            <person name="Itakura S."/>
            <person name="Fukuzumi Y."/>
            <person name="Fujimori Y."/>
            <person name="Komiyama M."/>
            <person name="Tashiro H."/>
            <person name="Tanigami A."/>
            <person name="Fujiwara T."/>
            <person name="Ono T."/>
            <person name="Yamada K."/>
            <person name="Fujii Y."/>
            <person name="Ozaki K."/>
            <person name="Hirao M."/>
            <person name="Ohmori Y."/>
            <person name="Kawabata A."/>
            <person name="Hikiji T."/>
            <person name="Kobatake N."/>
            <person name="Inagaki H."/>
            <person name="Ikema Y."/>
            <person name="Okamoto S."/>
            <person name="Okitani R."/>
            <person name="Kawakami T."/>
            <person name="Noguchi S."/>
            <person name="Itoh T."/>
            <person name="Shigeta K."/>
            <person name="Senba T."/>
            <person name="Matsumura K."/>
            <person name="Nakajima Y."/>
            <person name="Mizuno T."/>
            <person name="Morinaga M."/>
            <person name="Sasaki M."/>
            <person name="Togashi T."/>
            <person name="Oyama M."/>
            <person name="Hata H."/>
            <person name="Watanabe M."/>
            <person name="Komatsu T."/>
            <person name="Mizushima-Sugano J."/>
            <person name="Satoh T."/>
            <person name="Shirai Y."/>
            <person name="Takahashi Y."/>
            <person name="Nakagawa K."/>
            <person name="Okumura K."/>
            <person name="Nagase T."/>
            <person name="Nomura N."/>
            <person name="Kikuchi H."/>
            <person name="Masuho Y."/>
            <person name="Yamashita R."/>
            <person name="Nakai K."/>
            <person name="Yada T."/>
            <person name="Nakamura Y."/>
            <person name="Ohara O."/>
            <person name="Isogai T."/>
            <person name="Sugano S."/>
        </authorList>
    </citation>
    <scope>NUCLEOTIDE SEQUENCE [LARGE SCALE MRNA] (ISOFORMS 1 AND 2)</scope>
    <source>
        <tissue>Colon mucosa</tissue>
        <tissue>Stomach</tissue>
    </source>
</reference>
<reference key="2">
    <citation type="journal article" date="2005" name="Nature">
        <title>Generation and annotation of the DNA sequences of human chromosomes 2 and 4.</title>
        <authorList>
            <person name="Hillier L.W."/>
            <person name="Graves T.A."/>
            <person name="Fulton R.S."/>
            <person name="Fulton L.A."/>
            <person name="Pepin K.H."/>
            <person name="Minx P."/>
            <person name="Wagner-McPherson C."/>
            <person name="Layman D."/>
            <person name="Wylie K."/>
            <person name="Sekhon M."/>
            <person name="Becker M.C."/>
            <person name="Fewell G.A."/>
            <person name="Delehaunty K.D."/>
            <person name="Miner T.L."/>
            <person name="Nash W.E."/>
            <person name="Kremitzki C."/>
            <person name="Oddy L."/>
            <person name="Du H."/>
            <person name="Sun H."/>
            <person name="Bradshaw-Cordum H."/>
            <person name="Ali J."/>
            <person name="Carter J."/>
            <person name="Cordes M."/>
            <person name="Harris A."/>
            <person name="Isak A."/>
            <person name="van Brunt A."/>
            <person name="Nguyen C."/>
            <person name="Du F."/>
            <person name="Courtney L."/>
            <person name="Kalicki J."/>
            <person name="Ozersky P."/>
            <person name="Abbott S."/>
            <person name="Armstrong J."/>
            <person name="Belter E.A."/>
            <person name="Caruso L."/>
            <person name="Cedroni M."/>
            <person name="Cotton M."/>
            <person name="Davidson T."/>
            <person name="Desai A."/>
            <person name="Elliott G."/>
            <person name="Erb T."/>
            <person name="Fronick C."/>
            <person name="Gaige T."/>
            <person name="Haakenson W."/>
            <person name="Haglund K."/>
            <person name="Holmes A."/>
            <person name="Harkins R."/>
            <person name="Kim K."/>
            <person name="Kruchowski S.S."/>
            <person name="Strong C.M."/>
            <person name="Grewal N."/>
            <person name="Goyea E."/>
            <person name="Hou S."/>
            <person name="Levy A."/>
            <person name="Martinka S."/>
            <person name="Mead K."/>
            <person name="McLellan M.D."/>
            <person name="Meyer R."/>
            <person name="Randall-Maher J."/>
            <person name="Tomlinson C."/>
            <person name="Dauphin-Kohlberg S."/>
            <person name="Kozlowicz-Reilly A."/>
            <person name="Shah N."/>
            <person name="Swearengen-Shahid S."/>
            <person name="Snider J."/>
            <person name="Strong J.T."/>
            <person name="Thompson J."/>
            <person name="Yoakum M."/>
            <person name="Leonard S."/>
            <person name="Pearman C."/>
            <person name="Trani L."/>
            <person name="Radionenko M."/>
            <person name="Waligorski J.E."/>
            <person name="Wang C."/>
            <person name="Rock S.M."/>
            <person name="Tin-Wollam A.-M."/>
            <person name="Maupin R."/>
            <person name="Latreille P."/>
            <person name="Wendl M.C."/>
            <person name="Yang S.-P."/>
            <person name="Pohl C."/>
            <person name="Wallis J.W."/>
            <person name="Spieth J."/>
            <person name="Bieri T.A."/>
            <person name="Berkowicz N."/>
            <person name="Nelson J.O."/>
            <person name="Osborne J."/>
            <person name="Ding L."/>
            <person name="Meyer R."/>
            <person name="Sabo A."/>
            <person name="Shotland Y."/>
            <person name="Sinha P."/>
            <person name="Wohldmann P.E."/>
            <person name="Cook L.L."/>
            <person name="Hickenbotham M.T."/>
            <person name="Eldred J."/>
            <person name="Williams D."/>
            <person name="Jones T.A."/>
            <person name="She X."/>
            <person name="Ciccarelli F.D."/>
            <person name="Izaurralde E."/>
            <person name="Taylor J."/>
            <person name="Schmutz J."/>
            <person name="Myers R.M."/>
            <person name="Cox D.R."/>
            <person name="Huang X."/>
            <person name="McPherson J.D."/>
            <person name="Mardis E.R."/>
            <person name="Clifton S.W."/>
            <person name="Warren W.C."/>
            <person name="Chinwalla A.T."/>
            <person name="Eddy S.R."/>
            <person name="Marra M.A."/>
            <person name="Ovcharenko I."/>
            <person name="Furey T.S."/>
            <person name="Miller W."/>
            <person name="Eichler E.E."/>
            <person name="Bork P."/>
            <person name="Suyama M."/>
            <person name="Torrents D."/>
            <person name="Waterston R.H."/>
            <person name="Wilson R.K."/>
        </authorList>
    </citation>
    <scope>NUCLEOTIDE SEQUENCE [LARGE SCALE GENOMIC DNA]</scope>
</reference>
<reference key="3">
    <citation type="submission" date="2005-09" db="EMBL/GenBank/DDBJ databases">
        <authorList>
            <person name="Mural R.J."/>
            <person name="Istrail S."/>
            <person name="Sutton G.G."/>
            <person name="Florea L."/>
            <person name="Halpern A.L."/>
            <person name="Mobarry C.M."/>
            <person name="Lippert R."/>
            <person name="Walenz B."/>
            <person name="Shatkay H."/>
            <person name="Dew I."/>
            <person name="Miller J.R."/>
            <person name="Flanigan M.J."/>
            <person name="Edwards N.J."/>
            <person name="Bolanos R."/>
            <person name="Fasulo D."/>
            <person name="Halldorsson B.V."/>
            <person name="Hannenhalli S."/>
            <person name="Turner R."/>
            <person name="Yooseph S."/>
            <person name="Lu F."/>
            <person name="Nusskern D.R."/>
            <person name="Shue B.C."/>
            <person name="Zheng X.H."/>
            <person name="Zhong F."/>
            <person name="Delcher A.L."/>
            <person name="Huson D.H."/>
            <person name="Kravitz S.A."/>
            <person name="Mouchard L."/>
            <person name="Reinert K."/>
            <person name="Remington K.A."/>
            <person name="Clark A.G."/>
            <person name="Waterman M.S."/>
            <person name="Eichler E.E."/>
            <person name="Adams M.D."/>
            <person name="Hunkapiller M.W."/>
            <person name="Myers E.W."/>
            <person name="Venter J.C."/>
        </authorList>
    </citation>
    <scope>NUCLEOTIDE SEQUENCE [LARGE SCALE GENOMIC DNA]</scope>
</reference>
<reference key="4">
    <citation type="journal article" date="2004" name="Genome Res.">
        <title>The status, quality, and expansion of the NIH full-length cDNA project: the Mammalian Gene Collection (MGC).</title>
        <authorList>
            <consortium name="The MGC Project Team"/>
        </authorList>
    </citation>
    <scope>NUCLEOTIDE SEQUENCE [LARGE SCALE MRNA] (ISOFORM 1)</scope>
    <source>
        <tissue>Brain</tissue>
    </source>
</reference>
<reference key="5">
    <citation type="journal article" date="2007" name="BMC Genomics">
        <title>The full-ORF clone resource of the German cDNA consortium.</title>
        <authorList>
            <person name="Bechtel S."/>
            <person name="Rosenfelder H."/>
            <person name="Duda A."/>
            <person name="Schmidt C.P."/>
            <person name="Ernst U."/>
            <person name="Wellenreuther R."/>
            <person name="Mehrle A."/>
            <person name="Schuster C."/>
            <person name="Bahr A."/>
            <person name="Bloecker H."/>
            <person name="Heubner D."/>
            <person name="Hoerlein A."/>
            <person name="Michel G."/>
            <person name="Wedler H."/>
            <person name="Koehrer K."/>
            <person name="Ottenwaelder B."/>
            <person name="Poustka A."/>
            <person name="Wiemann S."/>
            <person name="Schupp I."/>
        </authorList>
    </citation>
    <scope>NUCLEOTIDE SEQUENCE [LARGE SCALE MRNA] OF 11-689 (ISOFORM 1)</scope>
    <source>
        <tissue>Amygdala</tissue>
        <tissue>Stomach</tissue>
    </source>
</reference>
<reference key="6">
    <citation type="journal article" date="2004" name="Proc. Natl. Acad. Sci. U.S.A.">
        <title>Large-scale cDNA transfection screening for genes related to cancer development and progression.</title>
        <authorList>
            <person name="Wan D."/>
            <person name="Gong Y."/>
            <person name="Qin W."/>
            <person name="Zhang P."/>
            <person name="Li J."/>
            <person name="Wei L."/>
            <person name="Zhou X."/>
            <person name="Li H."/>
            <person name="Qiu X."/>
            <person name="Zhong F."/>
            <person name="He L."/>
            <person name="Yu J."/>
            <person name="Yao G."/>
            <person name="Jiang H."/>
            <person name="Qian L."/>
            <person name="Yu Y."/>
            <person name="Shu H."/>
            <person name="Chen X."/>
            <person name="Xu H."/>
            <person name="Guo M."/>
            <person name="Pan Z."/>
            <person name="Chen Y."/>
            <person name="Ge C."/>
            <person name="Yang S."/>
            <person name="Gu J."/>
        </authorList>
    </citation>
    <scope>NUCLEOTIDE SEQUENCE [LARGE SCALE MRNA] OF 286-689 (ISOFORM 1)</scope>
</reference>
<reference key="7">
    <citation type="journal article" date="2011" name="BMC Syst. Biol.">
        <title>Initial characterization of the human central proteome.</title>
        <authorList>
            <person name="Burkard T.R."/>
            <person name="Planyavsky M."/>
            <person name="Kaupe I."/>
            <person name="Breitwieser F.P."/>
            <person name="Buerckstuemmer T."/>
            <person name="Bennett K.L."/>
            <person name="Superti-Furga G."/>
            <person name="Colinge J."/>
        </authorList>
    </citation>
    <scope>IDENTIFICATION BY MASS SPECTROMETRY [LARGE SCALE ANALYSIS]</scope>
</reference>
<reference key="8">
    <citation type="journal article" date="2012" name="Proc. Natl. Acad. Sci. U.S.A.">
        <title>N-terminal acetylome analyses and functional insights of the N-terminal acetyltransferase NatB.</title>
        <authorList>
            <person name="Van Damme P."/>
            <person name="Lasa M."/>
            <person name="Polevoda B."/>
            <person name="Gazquez C."/>
            <person name="Elosegui-Artola A."/>
            <person name="Kim D.S."/>
            <person name="De Juan-Pardo E."/>
            <person name="Demeyer K."/>
            <person name="Hole K."/>
            <person name="Larrea E."/>
            <person name="Timmerman E."/>
            <person name="Prieto J."/>
            <person name="Arnesen T."/>
            <person name="Sherman F."/>
            <person name="Gevaert K."/>
            <person name="Aldabe R."/>
        </authorList>
    </citation>
    <scope>ACETYLATION [LARGE SCALE ANALYSIS] AT ALA-2</scope>
    <scope>CLEAVAGE OF INITIATOR METHIONINE [LARGE SCALE ANALYSIS]</scope>
    <scope>IDENTIFICATION BY MASS SPECTROMETRY [LARGE SCALE ANALYSIS]</scope>
</reference>
<reference key="9">
    <citation type="journal article" date="2013" name="J. Biol. Chem.">
        <title>Transmembrane protein 214 (TMEM214) mediates endoplasmic reticulum stress-induced caspase 4 enzyme activation and apoptosis.</title>
        <authorList>
            <person name="Li C."/>
            <person name="Wei J."/>
            <person name="Li Y."/>
            <person name="He X."/>
            <person name="Zhou Q."/>
            <person name="Yan J."/>
            <person name="Zhang J."/>
            <person name="Liu Y."/>
            <person name="Liu Y."/>
            <person name="Shu H.B."/>
        </authorList>
    </citation>
    <scope>FUNCTION</scope>
    <scope>SUBCELLULAR LOCATION</scope>
</reference>
<reference key="10">
    <citation type="journal article" date="2015" name="Proteomics">
        <title>N-terminome analysis of the human mitochondrial proteome.</title>
        <authorList>
            <person name="Vaca Jacome A.S."/>
            <person name="Rabilloud T."/>
            <person name="Schaeffer-Reiss C."/>
            <person name="Rompais M."/>
            <person name="Ayoub D."/>
            <person name="Lane L."/>
            <person name="Bairoch A."/>
            <person name="Van Dorsselaer A."/>
            <person name="Carapito C."/>
        </authorList>
    </citation>
    <scope>IDENTIFICATION BY MASS SPECTROMETRY [LARGE SCALE ANALYSIS]</scope>
</reference>
<protein>
    <recommendedName>
        <fullName>Transmembrane protein 214</fullName>
    </recommendedName>
</protein>
<keyword id="KW-0007">Acetylation</keyword>
<keyword id="KW-0025">Alternative splicing</keyword>
<keyword id="KW-0053">Apoptosis</keyword>
<keyword id="KW-0256">Endoplasmic reticulum</keyword>
<keyword id="KW-0325">Glycoprotein</keyword>
<keyword id="KW-0472">Membrane</keyword>
<keyword id="KW-1267">Proteomics identification</keyword>
<keyword id="KW-1185">Reference proteome</keyword>
<keyword id="KW-0812">Transmembrane</keyword>
<keyword id="KW-1133">Transmembrane helix</keyword>
<feature type="initiator methionine" description="Removed" evidence="6">
    <location>
        <position position="1"/>
    </location>
</feature>
<feature type="chain" id="PRO_0000321897" description="Transmembrane protein 214">
    <location>
        <begin position="2"/>
        <end position="689"/>
    </location>
</feature>
<feature type="transmembrane region" description="Helical" evidence="1">
    <location>
        <begin position="480"/>
        <end position="500"/>
    </location>
</feature>
<feature type="transmembrane region" description="Helical" evidence="1">
    <location>
        <begin position="616"/>
        <end position="636"/>
    </location>
</feature>
<feature type="region of interest" description="Disordered" evidence="2">
    <location>
        <begin position="1"/>
        <end position="37"/>
    </location>
</feature>
<feature type="region of interest" description="Disordered" evidence="2">
    <location>
        <begin position="70"/>
        <end position="107"/>
    </location>
</feature>
<feature type="compositionally biased region" description="Gly residues" evidence="2">
    <location>
        <begin position="20"/>
        <end position="31"/>
    </location>
</feature>
<feature type="modified residue" description="N-acetylalanine" evidence="6">
    <location>
        <position position="2"/>
    </location>
</feature>
<feature type="glycosylation site" description="N-linked (GlcNAc...) asparagine" evidence="1">
    <location>
        <position position="269"/>
    </location>
</feature>
<feature type="glycosylation site" description="N-linked (GlcNAc...) asparagine" evidence="1">
    <location>
        <position position="307"/>
    </location>
</feature>
<feature type="splice variant" id="VSP_041155" description="In isoform 2." evidence="4">
    <location>
        <begin position="168"/>
        <end position="212"/>
    </location>
</feature>
<feature type="sequence variant" id="VAR_039370" description="In dbSNP:rs1124649.">
    <original>V</original>
    <variation>M</variation>
    <location>
        <position position="351"/>
    </location>
</feature>
<feature type="sequence conflict" description="In Ref. 4; AAH68479." evidence="5" ref="4">
    <original>P</original>
    <variation>H</variation>
    <location>
        <position position="99"/>
    </location>
</feature>
<feature type="sequence conflict" description="In Ref. 4; AAH68479." evidence="5" ref="4">
    <original>P</original>
    <variation>Q</variation>
    <location>
        <position position="138"/>
    </location>
</feature>
<feature type="sequence conflict" description="In Ref. 1; BAA91038." evidence="5" ref="1">
    <original>F</original>
    <variation>Y</variation>
    <location>
        <position position="326"/>
    </location>
</feature>
<feature type="sequence conflict" description="In Ref. 6; AAL55739." evidence="5" ref="6">
    <original>R</original>
    <variation>W</variation>
    <location>
        <position position="502"/>
    </location>
</feature>
<feature type="sequence conflict" description="In Ref. 1; BAG53451." evidence="5" ref="1">
    <original>V</original>
    <variation>A</variation>
    <location>
        <position position="651"/>
    </location>
</feature>
<sequence>MATKTAGVGRWEVVKKGRRPGVGAGAGGRGGGRNRRALGEANGVWKYDLTPAIQTTSTLYERGFENIMKRQNKEQVPPPAVEPKKPGNKKQPKKVATPPNQNQKQGRFRSLEEALKALDVADLQKELDKSQSVFSGNPSIWLKDLASYLNYKLQAPLSEPTLSQHTHDYPYSLVSRELRGIIRGLLAKAAGSLELFFDHCLFTMLQELDKTPGESLHGYRICIQAILQDKPKIATANLGKFLELLRSHQSRPAKCLTIMWALGQAGFANLTEGLKVWLGIMLPVLGIKSLSPFAITYLDRLLLMHPNLTKGFGMIGPKDFFPLLDFAYMPNNSLTPSLQEQLCQLYPRLKVLAFGAKPDSTLHTYFPSFLSRATPSCPPEMKKELLSSLTECLTVDPLSASVWRQLYPKHLSQSSLLLEHLLSSWEQIPKKVQKSLQETIQSLKLTNQELLRKGSSNNQDVVTCDMACKGLLQQVQGPRLPWTRLLLLLLVFAVGFLCHDLRSHSSFQASLTGRLLRSSGFLPASQQACAKLYSYSLQGYSWLGETLPLWGSHLLTVVRPSLQLAWAHTNATVSFLSAHCASHLAWFGDSLTSLSQRLQIQLPDSVNQLLRYLRELPLLFHQNVLLPLWHLLLEALAWAQEHCHEACRGEVTWDCMKTQLSEAVHWTWLCLQDITVAFLDWALALISQQ</sequence>
<proteinExistence type="evidence at protein level"/>
<evidence type="ECO:0000255" key="1"/>
<evidence type="ECO:0000256" key="2">
    <source>
        <dbReference type="SAM" id="MobiDB-lite"/>
    </source>
</evidence>
<evidence type="ECO:0000269" key="3">
    <source>
    </source>
</evidence>
<evidence type="ECO:0000303" key="4">
    <source>
    </source>
</evidence>
<evidence type="ECO:0000305" key="5"/>
<evidence type="ECO:0007744" key="6">
    <source>
    </source>
</evidence>
<gene>
    <name type="primary">TMEM214</name>
    <name type="ORF">PP446</name>
</gene>
<organism>
    <name type="scientific">Homo sapiens</name>
    <name type="common">Human</name>
    <dbReference type="NCBI Taxonomy" id="9606"/>
    <lineage>
        <taxon>Eukaryota</taxon>
        <taxon>Metazoa</taxon>
        <taxon>Chordata</taxon>
        <taxon>Craniata</taxon>
        <taxon>Vertebrata</taxon>
        <taxon>Euteleostomi</taxon>
        <taxon>Mammalia</taxon>
        <taxon>Eutheria</taxon>
        <taxon>Euarchontoglires</taxon>
        <taxon>Primates</taxon>
        <taxon>Haplorrhini</taxon>
        <taxon>Catarrhini</taxon>
        <taxon>Hominidae</taxon>
        <taxon>Homo</taxon>
    </lineage>
</organism>
<accession>Q6NUQ4</accession>
<accession>A6NNF2</accession>
<accession>B3KUI9</accession>
<accession>B5MCD8</accession>
<accession>D6W547</accession>
<accession>Q53SW1</accession>
<accession>Q69YH4</accession>
<accession>Q8NC45</accession>
<accession>Q8WZ37</accession>
<accession>Q9NXH2</accession>